<protein>
    <recommendedName>
        <fullName>Ubiquitin-like protein ATG12</fullName>
    </recommendedName>
    <alternativeName>
        <fullName>Autophagy-related protein 12</fullName>
    </alternativeName>
</protein>
<evidence type="ECO:0000250" key="1"/>
<evidence type="ECO:0000256" key="2">
    <source>
        <dbReference type="SAM" id="MobiDB-lite"/>
    </source>
</evidence>
<evidence type="ECO:0000305" key="3"/>
<proteinExistence type="inferred from homology"/>
<dbReference type="EMBL" id="DS480402">
    <property type="protein sequence ID" value="EDO17567.1"/>
    <property type="molecule type" value="Genomic_DNA"/>
</dbReference>
<dbReference type="RefSeq" id="XP_001645425.1">
    <property type="nucleotide sequence ID" value="XM_001645375.1"/>
</dbReference>
<dbReference type="SMR" id="A7TJM4"/>
<dbReference type="FunCoup" id="A7TJM4">
    <property type="interactions" value="181"/>
</dbReference>
<dbReference type="STRING" id="436907.A7TJM4"/>
<dbReference type="GeneID" id="5545792"/>
<dbReference type="KEGG" id="vpo:Kpol_534p48"/>
<dbReference type="eggNOG" id="KOG3439">
    <property type="taxonomic scope" value="Eukaryota"/>
</dbReference>
<dbReference type="HOGENOM" id="CLU_106795_0_0_1"/>
<dbReference type="InParanoid" id="A7TJM4"/>
<dbReference type="OMA" id="NIGELWM"/>
<dbReference type="OrthoDB" id="10003551at2759"/>
<dbReference type="PhylomeDB" id="A7TJM4"/>
<dbReference type="Proteomes" id="UP000000267">
    <property type="component" value="Unassembled WGS sequence"/>
</dbReference>
<dbReference type="GO" id="GO:0034274">
    <property type="term" value="C:Atg12-Atg5-Atg16 complex"/>
    <property type="evidence" value="ECO:0007669"/>
    <property type="project" value="EnsemblFungi"/>
</dbReference>
<dbReference type="GO" id="GO:0000421">
    <property type="term" value="C:autophagosome membrane"/>
    <property type="evidence" value="ECO:0007669"/>
    <property type="project" value="TreeGrafter"/>
</dbReference>
<dbReference type="GO" id="GO:0005829">
    <property type="term" value="C:cytosol"/>
    <property type="evidence" value="ECO:0007669"/>
    <property type="project" value="EnsemblFungi"/>
</dbReference>
<dbReference type="GO" id="GO:0034045">
    <property type="term" value="C:phagophore assembly site membrane"/>
    <property type="evidence" value="ECO:0007669"/>
    <property type="project" value="UniProtKB-SubCell"/>
</dbReference>
<dbReference type="GO" id="GO:0019776">
    <property type="term" value="F:Atg8-family ligase activity"/>
    <property type="evidence" value="ECO:0007669"/>
    <property type="project" value="EnsemblFungi"/>
</dbReference>
<dbReference type="GO" id="GO:0008047">
    <property type="term" value="F:enzyme activator activity"/>
    <property type="evidence" value="ECO:0007669"/>
    <property type="project" value="EnsemblFungi"/>
</dbReference>
<dbReference type="GO" id="GO:0031386">
    <property type="term" value="F:protein tag activity"/>
    <property type="evidence" value="ECO:0007669"/>
    <property type="project" value="EnsemblFungi"/>
</dbReference>
<dbReference type="GO" id="GO:0000045">
    <property type="term" value="P:autophagosome assembly"/>
    <property type="evidence" value="ECO:0007669"/>
    <property type="project" value="EnsemblFungi"/>
</dbReference>
<dbReference type="GO" id="GO:0097352">
    <property type="term" value="P:autophagosome maturation"/>
    <property type="evidence" value="ECO:0007669"/>
    <property type="project" value="TreeGrafter"/>
</dbReference>
<dbReference type="GO" id="GO:0000422">
    <property type="term" value="P:autophagy of mitochondrion"/>
    <property type="evidence" value="ECO:0007669"/>
    <property type="project" value="EnsemblFungi"/>
</dbReference>
<dbReference type="GO" id="GO:0032258">
    <property type="term" value="P:cytoplasm to vacuole targeting by the Cvt pathway"/>
    <property type="evidence" value="ECO:0007669"/>
    <property type="project" value="EnsemblFungi"/>
</dbReference>
<dbReference type="GO" id="GO:0061723">
    <property type="term" value="P:glycophagy"/>
    <property type="evidence" value="ECO:0007669"/>
    <property type="project" value="TreeGrafter"/>
</dbReference>
<dbReference type="GO" id="GO:0034727">
    <property type="term" value="P:piecemeal microautophagy of the nucleus"/>
    <property type="evidence" value="ECO:0007669"/>
    <property type="project" value="EnsemblFungi"/>
</dbReference>
<dbReference type="CDD" id="cd01612">
    <property type="entry name" value="Ubl_ATG12"/>
    <property type="match status" value="1"/>
</dbReference>
<dbReference type="Gene3D" id="3.10.20.90">
    <property type="entry name" value="Phosphatidylinositol 3-kinase Catalytic Subunit, Chain A, domain 1"/>
    <property type="match status" value="1"/>
</dbReference>
<dbReference type="InterPro" id="IPR007242">
    <property type="entry name" value="Atg12"/>
</dbReference>
<dbReference type="InterPro" id="IPR029071">
    <property type="entry name" value="Ubiquitin-like_domsf"/>
</dbReference>
<dbReference type="PANTHER" id="PTHR13385">
    <property type="entry name" value="AUTOPHAGY PROTEIN 12"/>
    <property type="match status" value="1"/>
</dbReference>
<dbReference type="PANTHER" id="PTHR13385:SF0">
    <property type="entry name" value="UBIQUITIN-LIKE PROTEIN ATG12"/>
    <property type="match status" value="1"/>
</dbReference>
<dbReference type="Pfam" id="PF04110">
    <property type="entry name" value="APG12"/>
    <property type="match status" value="1"/>
</dbReference>
<dbReference type="SUPFAM" id="SSF54236">
    <property type="entry name" value="Ubiquitin-like"/>
    <property type="match status" value="1"/>
</dbReference>
<comment type="function">
    <text evidence="1">Ubiquitin-like protein involved in cytoplasm to vacuole transport (Cvt), autophagy vesicles formation, mitophagy, and nucleophagy. Conjugation with ATG5 through a ubiquitin-like conjugating system involving also ATG7 as an E1-like activating enzyme and ATG10 as an E2-like conjugating enzyme, is essential for its function. The ATG12-ATG5 conjugate functions as an E3-like enzyme which is required for lipidation of ATG8 and ATG8 association to the vesicle membranes (By similarity).</text>
</comment>
<comment type="subunit">
    <text evidence="1">Forms a conjugate with ATG5.</text>
</comment>
<comment type="subcellular location">
    <subcellularLocation>
        <location evidence="1">Preautophagosomal structure membrane</location>
        <topology evidence="1">Peripheral membrane protein</topology>
    </subcellularLocation>
</comment>
<comment type="similarity">
    <text evidence="3">Belongs to the ATG12 family.</text>
</comment>
<sequence>MSGMLLESESDHEDSEISSGYSENGRLMSQDPLSLSTGNVMQSRLEQYSKRLSQLGLAATDGDSNGDGTDNDIIPSEYDEEEISVPKQEVPMTTSLILDKLPPTTNEFLHQLSIKEMEQDIEKTVHKIQIKFQPIGSIPLITPSVCTISSQQTFSMIILFLKKRLKVEQVFCYINNSFAPNPQQTIGSLWSQFKVNDELIVSYCGTVAFG</sequence>
<feature type="chain" id="PRO_0000317942" description="Ubiquitin-like protein ATG12">
    <location>
        <begin position="1"/>
        <end position="210"/>
    </location>
</feature>
<feature type="region of interest" description="Disordered" evidence="2">
    <location>
        <begin position="1"/>
        <end position="41"/>
    </location>
</feature>
<feature type="region of interest" description="Disordered" evidence="2">
    <location>
        <begin position="58"/>
        <end position="84"/>
    </location>
</feature>
<feature type="compositionally biased region" description="Polar residues" evidence="2">
    <location>
        <begin position="31"/>
        <end position="41"/>
    </location>
</feature>
<feature type="compositionally biased region" description="Low complexity" evidence="2">
    <location>
        <begin position="60"/>
        <end position="72"/>
    </location>
</feature>
<feature type="cross-link" description="Glycyl lysine isopeptide (Gly-Lys) (interchain with K-150 in ATG5)" evidence="1">
    <location>
        <position position="210"/>
    </location>
</feature>
<gene>
    <name type="primary">ATG12</name>
    <name type="ORF">Kpol_534p48</name>
</gene>
<organism>
    <name type="scientific">Vanderwaltozyma polyspora (strain ATCC 22028 / DSM 70294 / BCRC 21397 / CBS 2163 / NBRC 10782 / NRRL Y-8283 / UCD 57-17)</name>
    <name type="common">Kluyveromyces polysporus</name>
    <dbReference type="NCBI Taxonomy" id="436907"/>
    <lineage>
        <taxon>Eukaryota</taxon>
        <taxon>Fungi</taxon>
        <taxon>Dikarya</taxon>
        <taxon>Ascomycota</taxon>
        <taxon>Saccharomycotina</taxon>
        <taxon>Saccharomycetes</taxon>
        <taxon>Saccharomycetales</taxon>
        <taxon>Saccharomycetaceae</taxon>
        <taxon>Vanderwaltozyma</taxon>
    </lineage>
</organism>
<name>ATG12_VANPO</name>
<keyword id="KW-0072">Autophagy</keyword>
<keyword id="KW-1017">Isopeptide bond</keyword>
<keyword id="KW-0472">Membrane</keyword>
<keyword id="KW-0653">Protein transport</keyword>
<keyword id="KW-1185">Reference proteome</keyword>
<keyword id="KW-0813">Transport</keyword>
<keyword id="KW-0833">Ubl conjugation pathway</keyword>
<reference key="1">
    <citation type="journal article" date="2007" name="Proc. Natl. Acad. Sci. U.S.A.">
        <title>Independent sorting-out of thousands of duplicated gene pairs in two yeast species descended from a whole-genome duplication.</title>
        <authorList>
            <person name="Scannell D.R."/>
            <person name="Frank A.C."/>
            <person name="Conant G.C."/>
            <person name="Byrne K.P."/>
            <person name="Woolfit M."/>
            <person name="Wolfe K.H."/>
        </authorList>
    </citation>
    <scope>NUCLEOTIDE SEQUENCE [LARGE SCALE GENOMIC DNA]</scope>
    <source>
        <strain>ATCC 22028 / DSM 70294 / BCRC 21397 / CBS 2163 / NBRC 10782 / NRRL Y-8283 / UCD 57-17</strain>
    </source>
</reference>
<accession>A7TJM4</accession>